<accession>Q9HTX7</accession>
<keyword id="KW-0560">Oxidoreductase</keyword>
<keyword id="KW-0663">Pyridoxal phosphate</keyword>
<keyword id="KW-1185">Reference proteome</keyword>
<reference key="1">
    <citation type="journal article" date="2000" name="Nature">
        <title>Complete genome sequence of Pseudomonas aeruginosa PAO1, an opportunistic pathogen.</title>
        <authorList>
            <person name="Stover C.K."/>
            <person name="Pham X.-Q.T."/>
            <person name="Erwin A.L."/>
            <person name="Mizoguchi S.D."/>
            <person name="Warrener P."/>
            <person name="Hickey M.J."/>
            <person name="Brinkman F.S.L."/>
            <person name="Hufnagle W.O."/>
            <person name="Kowalik D.J."/>
            <person name="Lagrou M."/>
            <person name="Garber R.L."/>
            <person name="Goltry L."/>
            <person name="Tolentino E."/>
            <person name="Westbrock-Wadman S."/>
            <person name="Yuan Y."/>
            <person name="Brody L.L."/>
            <person name="Coulter S.N."/>
            <person name="Folger K.R."/>
            <person name="Kas A."/>
            <person name="Larbig K."/>
            <person name="Lim R.M."/>
            <person name="Smith K.A."/>
            <person name="Spencer D.H."/>
            <person name="Wong G.K.-S."/>
            <person name="Wu Z."/>
            <person name="Paulsen I.T."/>
            <person name="Reizer J."/>
            <person name="Saier M.H. Jr."/>
            <person name="Hancock R.E.W."/>
            <person name="Lory S."/>
            <person name="Olson M.V."/>
        </authorList>
    </citation>
    <scope>NUCLEOTIDE SEQUENCE [LARGE SCALE GENOMIC DNA]</scope>
    <source>
        <strain>ATCC 15692 / DSM 22644 / CIP 104116 / JCM 14847 / LMG 12228 / 1C / PRS 101 / PAO1</strain>
    </source>
</reference>
<protein>
    <recommendedName>
        <fullName>Glycine dehydrogenase (decarboxylating) 2</fullName>
        <ecNumber>1.4.4.2</ecNumber>
    </recommendedName>
    <alternativeName>
        <fullName>Glycine cleavage system P-protein 2</fullName>
    </alternativeName>
    <alternativeName>
        <fullName>Glycine decarboxylase 2</fullName>
    </alternativeName>
    <alternativeName>
        <fullName>Glycine dehydrogenase (aminomethyl-transferring) 2</fullName>
    </alternativeName>
</protein>
<evidence type="ECO:0000250" key="1"/>
<evidence type="ECO:0000305" key="2"/>
<organism>
    <name type="scientific">Pseudomonas aeruginosa (strain ATCC 15692 / DSM 22644 / CIP 104116 / JCM 14847 / LMG 12228 / 1C / PRS 101 / PAO1)</name>
    <dbReference type="NCBI Taxonomy" id="208964"/>
    <lineage>
        <taxon>Bacteria</taxon>
        <taxon>Pseudomonadati</taxon>
        <taxon>Pseudomonadota</taxon>
        <taxon>Gammaproteobacteria</taxon>
        <taxon>Pseudomonadales</taxon>
        <taxon>Pseudomonadaceae</taxon>
        <taxon>Pseudomonas</taxon>
    </lineage>
</organism>
<gene>
    <name type="primary">gcvP2</name>
    <name type="ordered locus">PA5213</name>
</gene>
<dbReference type="EC" id="1.4.4.2"/>
<dbReference type="EMBL" id="AE004091">
    <property type="protein sequence ID" value="AAG08598.1"/>
    <property type="molecule type" value="Genomic_DNA"/>
</dbReference>
<dbReference type="PIR" id="E82994">
    <property type="entry name" value="E82994"/>
</dbReference>
<dbReference type="SMR" id="Q9HTX7"/>
<dbReference type="FunCoup" id="Q9HTX7">
    <property type="interactions" value="613"/>
</dbReference>
<dbReference type="STRING" id="208964.PA5213"/>
<dbReference type="PaxDb" id="208964-PA5213"/>
<dbReference type="KEGG" id="pae:PA5213"/>
<dbReference type="PATRIC" id="fig|208964.12.peg.5463"/>
<dbReference type="PseudoCAP" id="PA5213"/>
<dbReference type="HOGENOM" id="CLU_004620_3_2_6"/>
<dbReference type="InParanoid" id="Q9HTX7"/>
<dbReference type="OrthoDB" id="9801272at2"/>
<dbReference type="PhylomeDB" id="Q9HTX7"/>
<dbReference type="BioCyc" id="PAER208964:G1FZ6-5332-MONOMER"/>
<dbReference type="Proteomes" id="UP000002438">
    <property type="component" value="Chromosome"/>
</dbReference>
<dbReference type="GO" id="GO:0005829">
    <property type="term" value="C:cytosol"/>
    <property type="evidence" value="ECO:0000318"/>
    <property type="project" value="GO_Central"/>
</dbReference>
<dbReference type="GO" id="GO:0005960">
    <property type="term" value="C:glycine cleavage complex"/>
    <property type="evidence" value="ECO:0000318"/>
    <property type="project" value="GO_Central"/>
</dbReference>
<dbReference type="GO" id="GO:0016594">
    <property type="term" value="F:glycine binding"/>
    <property type="evidence" value="ECO:0000318"/>
    <property type="project" value="GO_Central"/>
</dbReference>
<dbReference type="GO" id="GO:0004375">
    <property type="term" value="F:glycine dehydrogenase (decarboxylating) activity"/>
    <property type="evidence" value="ECO:0000318"/>
    <property type="project" value="GO_Central"/>
</dbReference>
<dbReference type="GO" id="GO:0030170">
    <property type="term" value="F:pyridoxal phosphate binding"/>
    <property type="evidence" value="ECO:0000318"/>
    <property type="project" value="GO_Central"/>
</dbReference>
<dbReference type="GO" id="GO:0019464">
    <property type="term" value="P:glycine decarboxylation via glycine cleavage system"/>
    <property type="evidence" value="ECO:0000318"/>
    <property type="project" value="GO_Central"/>
</dbReference>
<dbReference type="CDD" id="cd00613">
    <property type="entry name" value="GDC-P"/>
    <property type="match status" value="2"/>
</dbReference>
<dbReference type="FunFam" id="3.40.640.10:FF:000005">
    <property type="entry name" value="Glycine dehydrogenase (decarboxylating), mitochondrial"/>
    <property type="match status" value="1"/>
</dbReference>
<dbReference type="FunFam" id="3.90.1150.10:FF:000007">
    <property type="entry name" value="Glycine dehydrogenase (decarboxylating), mitochondrial"/>
    <property type="match status" value="1"/>
</dbReference>
<dbReference type="FunFam" id="3.40.640.10:FF:000007">
    <property type="entry name" value="glycine dehydrogenase (Decarboxylating), mitochondrial"/>
    <property type="match status" value="1"/>
</dbReference>
<dbReference type="Gene3D" id="3.90.1150.10">
    <property type="entry name" value="Aspartate Aminotransferase, domain 1"/>
    <property type="match status" value="1"/>
</dbReference>
<dbReference type="Gene3D" id="3.40.640.10">
    <property type="entry name" value="Type I PLP-dependent aspartate aminotransferase-like (Major domain)"/>
    <property type="match status" value="2"/>
</dbReference>
<dbReference type="HAMAP" id="MF_00711">
    <property type="entry name" value="GcvP"/>
    <property type="match status" value="1"/>
</dbReference>
<dbReference type="InterPro" id="IPR003437">
    <property type="entry name" value="GcvP"/>
</dbReference>
<dbReference type="InterPro" id="IPR049316">
    <property type="entry name" value="GDC-P_C"/>
</dbReference>
<dbReference type="InterPro" id="IPR049315">
    <property type="entry name" value="GDC-P_N"/>
</dbReference>
<dbReference type="InterPro" id="IPR020581">
    <property type="entry name" value="GDC_P"/>
</dbReference>
<dbReference type="InterPro" id="IPR015424">
    <property type="entry name" value="PyrdxlP-dep_Trfase"/>
</dbReference>
<dbReference type="InterPro" id="IPR015421">
    <property type="entry name" value="PyrdxlP-dep_Trfase_major"/>
</dbReference>
<dbReference type="InterPro" id="IPR015422">
    <property type="entry name" value="PyrdxlP-dep_Trfase_small"/>
</dbReference>
<dbReference type="NCBIfam" id="TIGR00461">
    <property type="entry name" value="gcvP"/>
    <property type="match status" value="1"/>
</dbReference>
<dbReference type="PANTHER" id="PTHR11773:SF13">
    <property type="entry name" value="GLYCINE DEHYDROGENASE (DECARBOXYLATING)"/>
    <property type="match status" value="1"/>
</dbReference>
<dbReference type="PANTHER" id="PTHR11773">
    <property type="entry name" value="GLYCINE DEHYDROGENASE, DECARBOXYLATING"/>
    <property type="match status" value="1"/>
</dbReference>
<dbReference type="Pfam" id="PF21478">
    <property type="entry name" value="GcvP2_C"/>
    <property type="match status" value="1"/>
</dbReference>
<dbReference type="Pfam" id="PF02347">
    <property type="entry name" value="GDC-P"/>
    <property type="match status" value="1"/>
</dbReference>
<dbReference type="SUPFAM" id="SSF53383">
    <property type="entry name" value="PLP-dependent transferases"/>
    <property type="match status" value="2"/>
</dbReference>
<name>GCSP2_PSEAE</name>
<proteinExistence type="inferred from homology"/>
<feature type="chain" id="PRO_0000166926" description="Glycine dehydrogenase (decarboxylating) 2">
    <location>
        <begin position="1"/>
        <end position="958"/>
    </location>
</feature>
<feature type="modified residue" description="N6-(pyridoxal phosphate)lysine" evidence="1">
    <location>
        <position position="707"/>
    </location>
</feature>
<sequence>MSQTPSLAQLQPADAFLRRHLGPDPAEQQAMLAFLGVSTRAELIVQTVPPAIRLNRPLELPAALDEQAALARLRGYAGLNQRWTSLIGMGYYGTVTPSVILRNVLENPGWYTAYTPYQPEIAQGRLEALLNFQQLTIDLTGLDLASASLLDEATAAAEAMALARRVAKARSNRFFVDAHCHPQTVSVLRTRAEAFGFELVVDEPDNLAAHAVFGALLQYPDSRGEIRDLRPLIEALHGQQALACVASDLLALLLLTPPGELGADVVLGSAQRFGVPMGYGGPHAAFFATREGYKRAMPGRIIGVSRDARGNPALRMALQTREQHIRREKANSNICTAQVLLANIASLYAVYHGPQELKRIAQRVQRLTALLAAGLKSKGLRRLNRHFFDTLTYEVGERQAAILERARAARVNLRVVDDRRLALSLDETCDAATLATLFEIFLGAGHGLDVAHLDGGAVADGIPAVLQRTSAYLQHPVFNAHHSETEMLRYLRQLEGKDLALNQAMIPLGSCTMKLNASSEMIPITWPEFAELHPFVPREQAEGYRRMIDELEAWLRAITGFDAICMQPNSGAQGEYAGLLAIRRYHQSRGDSQRDICLIPASAHGTNPASAIMASMRVVIVECDPRGNVDLDDLRLKAAEAGDRLSCLMITYPSTHGVYEEGIGEICEVVHRHGGQVYMDGANLNAQVGLARPADIGADVSHMNLHKTFCIPHGGGGPGMGPIGVKRHLAPFVANHPVIRVEGPNPLNDAVSATPWGSASILPISWMYIAMMGPQLADASEVAILSANYLANRLDGAFPVLYRGRNERVAHECILDLRPLKAQTGITEEDVAKRLMDYGFHAPTMSFPVPGTLMVEPTESESKAELDRFVEAMLSIRAEIGKVESGAWPAEDNPLKRAPHTLADVTGIWQRPYEIAEAVTPSEHARAFKYWPAVNRVDNVYGDRNLFCACVPLDDYRE</sequence>
<comment type="function">
    <text evidence="1">The glycine cleavage system catalyzes the degradation of glycine. The P protein binds the alpha-amino group of glycine through its pyridoxal phosphate cofactor; CO(2) is released and the remaining methylamine moiety is then transferred to the lipoamide cofactor of the H protein (By similarity).</text>
</comment>
<comment type="catalytic activity">
    <reaction>
        <text>N(6)-[(R)-lipoyl]-L-lysyl-[glycine-cleavage complex H protein] + glycine + H(+) = N(6)-[(R)-S(8)-aminomethyldihydrolipoyl]-L-lysyl-[glycine-cleavage complex H protein] + CO2</text>
        <dbReference type="Rhea" id="RHEA:24304"/>
        <dbReference type="Rhea" id="RHEA-COMP:10494"/>
        <dbReference type="Rhea" id="RHEA-COMP:10495"/>
        <dbReference type="ChEBI" id="CHEBI:15378"/>
        <dbReference type="ChEBI" id="CHEBI:16526"/>
        <dbReference type="ChEBI" id="CHEBI:57305"/>
        <dbReference type="ChEBI" id="CHEBI:83099"/>
        <dbReference type="ChEBI" id="CHEBI:83143"/>
        <dbReference type="EC" id="1.4.4.2"/>
    </reaction>
</comment>
<comment type="cofactor">
    <cofactor evidence="1">
        <name>pyridoxal 5'-phosphate</name>
        <dbReference type="ChEBI" id="CHEBI:597326"/>
    </cofactor>
</comment>
<comment type="subunit">
    <text evidence="1">The glycine cleavage system is composed of four proteins: P, T, L and H.</text>
</comment>
<comment type="similarity">
    <text evidence="2">Belongs to the GcvP family.</text>
</comment>